<comment type="function">
    <text evidence="1">Modifies, by uridylylation and deuridylylation, the PII regulatory proteins (GlnB and homologs), in response to the nitrogen status of the cell that GlnD senses through the glutamine level. Under low glutamine levels, catalyzes the conversion of the PII proteins and UTP to PII-UMP and PPi, while under higher glutamine levels, GlnD hydrolyzes PII-UMP to PII and UMP (deuridylylation). Thus, controls uridylylation state and activity of the PII proteins, and plays an important role in the regulation of nitrogen assimilation and metabolism.</text>
</comment>
<comment type="catalytic activity">
    <reaction evidence="1">
        <text>[protein-PII]-L-tyrosine + UTP = [protein-PII]-uridylyl-L-tyrosine + diphosphate</text>
        <dbReference type="Rhea" id="RHEA:13673"/>
        <dbReference type="Rhea" id="RHEA-COMP:12147"/>
        <dbReference type="Rhea" id="RHEA-COMP:12148"/>
        <dbReference type="ChEBI" id="CHEBI:33019"/>
        <dbReference type="ChEBI" id="CHEBI:46398"/>
        <dbReference type="ChEBI" id="CHEBI:46858"/>
        <dbReference type="ChEBI" id="CHEBI:90602"/>
        <dbReference type="EC" id="2.7.7.59"/>
    </reaction>
</comment>
<comment type="catalytic activity">
    <reaction evidence="1">
        <text>[protein-PII]-uridylyl-L-tyrosine + H2O = [protein-PII]-L-tyrosine + UMP + H(+)</text>
        <dbReference type="Rhea" id="RHEA:48600"/>
        <dbReference type="Rhea" id="RHEA-COMP:12147"/>
        <dbReference type="Rhea" id="RHEA-COMP:12148"/>
        <dbReference type="ChEBI" id="CHEBI:15377"/>
        <dbReference type="ChEBI" id="CHEBI:15378"/>
        <dbReference type="ChEBI" id="CHEBI:46858"/>
        <dbReference type="ChEBI" id="CHEBI:57865"/>
        <dbReference type="ChEBI" id="CHEBI:90602"/>
    </reaction>
</comment>
<comment type="cofactor">
    <cofactor evidence="1">
        <name>Mg(2+)</name>
        <dbReference type="ChEBI" id="CHEBI:18420"/>
    </cofactor>
</comment>
<comment type="activity regulation">
    <text evidence="1">Uridylyltransferase (UTase) activity is inhibited by glutamine, while glutamine activates uridylyl-removing (UR) activity.</text>
</comment>
<comment type="domain">
    <text evidence="1">Has four distinct domains: an N-terminal nucleotidyltransferase (NT) domain responsible for UTase activity, a central HD domain that encodes UR activity, and two C-terminal ACT domains that seem to have a role in glutamine sensing.</text>
</comment>
<comment type="similarity">
    <text evidence="1">Belongs to the GlnD family.</text>
</comment>
<reference key="1">
    <citation type="journal article" date="2003" name="Genome Res.">
        <title>Comparative genome analysis of Vibrio vulnificus, a marine pathogen.</title>
        <authorList>
            <person name="Chen C.-Y."/>
            <person name="Wu K.-M."/>
            <person name="Chang Y.-C."/>
            <person name="Chang C.-H."/>
            <person name="Tsai H.-C."/>
            <person name="Liao T.-L."/>
            <person name="Liu Y.-M."/>
            <person name="Chen H.-J."/>
            <person name="Shen A.B.-T."/>
            <person name="Li J.-C."/>
            <person name="Su T.-L."/>
            <person name="Shao C.-P."/>
            <person name="Lee C.-T."/>
            <person name="Hor L.-I."/>
            <person name="Tsai S.-F."/>
        </authorList>
    </citation>
    <scope>NUCLEOTIDE SEQUENCE [LARGE SCALE GENOMIC DNA]</scope>
    <source>
        <strain>YJ016</strain>
    </source>
</reference>
<evidence type="ECO:0000255" key="1">
    <source>
        <dbReference type="HAMAP-Rule" id="MF_00277"/>
    </source>
</evidence>
<evidence type="ECO:0000255" key="2">
    <source>
        <dbReference type="PROSITE-ProRule" id="PRU01175"/>
    </source>
</evidence>
<protein>
    <recommendedName>
        <fullName evidence="1">Bifunctional uridylyltransferase/uridylyl-removing enzyme</fullName>
        <shortName evidence="1">UTase/UR</shortName>
    </recommendedName>
    <alternativeName>
        <fullName evidence="1">Bifunctional [protein-PII] modification enzyme</fullName>
    </alternativeName>
    <alternativeName>
        <fullName evidence="1">Bifunctional nitrogen sensor protein</fullName>
    </alternativeName>
    <domain>
        <recommendedName>
            <fullName evidence="1">[Protein-PII] uridylyltransferase</fullName>
            <shortName evidence="1">PII uridylyltransferase</shortName>
            <shortName evidence="1">UTase</shortName>
            <ecNumber evidence="1">2.7.7.59</ecNumber>
        </recommendedName>
    </domain>
    <domain>
        <recommendedName>
            <fullName evidence="1">[Protein-PII]-UMP uridylyl-removing enzyme</fullName>
            <shortName evidence="1">UR</shortName>
            <ecNumber evidence="1">3.1.4.-</ecNumber>
        </recommendedName>
    </domain>
</protein>
<accession>Q7MIF8</accession>
<organism>
    <name type="scientific">Vibrio vulnificus (strain YJ016)</name>
    <dbReference type="NCBI Taxonomy" id="196600"/>
    <lineage>
        <taxon>Bacteria</taxon>
        <taxon>Pseudomonadati</taxon>
        <taxon>Pseudomonadota</taxon>
        <taxon>Gammaproteobacteria</taxon>
        <taxon>Vibrionales</taxon>
        <taxon>Vibrionaceae</taxon>
        <taxon>Vibrio</taxon>
    </lineage>
</organism>
<dbReference type="EC" id="2.7.7.59" evidence="1"/>
<dbReference type="EC" id="3.1.4.-" evidence="1"/>
<dbReference type="EMBL" id="BA000037">
    <property type="protein sequence ID" value="BAC95323.1"/>
    <property type="molecule type" value="Genomic_DNA"/>
</dbReference>
<dbReference type="RefSeq" id="WP_011150965.1">
    <property type="nucleotide sequence ID" value="NC_005139.1"/>
</dbReference>
<dbReference type="SMR" id="Q7MIF8"/>
<dbReference type="STRING" id="672.VV93_v1c22780"/>
<dbReference type="KEGG" id="vvy:VV2559"/>
<dbReference type="eggNOG" id="COG2844">
    <property type="taxonomic scope" value="Bacteria"/>
</dbReference>
<dbReference type="HOGENOM" id="CLU_012833_0_0_6"/>
<dbReference type="Proteomes" id="UP000002675">
    <property type="component" value="Chromosome I"/>
</dbReference>
<dbReference type="GO" id="GO:0008773">
    <property type="term" value="F:[protein-PII] uridylyltransferase activity"/>
    <property type="evidence" value="ECO:0007669"/>
    <property type="project" value="UniProtKB-UniRule"/>
</dbReference>
<dbReference type="GO" id="GO:0008081">
    <property type="term" value="F:phosphoric diester hydrolase activity"/>
    <property type="evidence" value="ECO:0007669"/>
    <property type="project" value="UniProtKB-UniRule"/>
</dbReference>
<dbReference type="GO" id="GO:0006808">
    <property type="term" value="P:regulation of nitrogen utilization"/>
    <property type="evidence" value="ECO:0007669"/>
    <property type="project" value="UniProtKB-UniRule"/>
</dbReference>
<dbReference type="CDD" id="cd04899">
    <property type="entry name" value="ACT_ACR-UUR-like_2"/>
    <property type="match status" value="1"/>
</dbReference>
<dbReference type="CDD" id="cd04900">
    <property type="entry name" value="ACT_UUR-like_1"/>
    <property type="match status" value="1"/>
</dbReference>
<dbReference type="CDD" id="cd00077">
    <property type="entry name" value="HDc"/>
    <property type="match status" value="1"/>
</dbReference>
<dbReference type="CDD" id="cd05401">
    <property type="entry name" value="NT_GlnE_GlnD_like"/>
    <property type="match status" value="1"/>
</dbReference>
<dbReference type="Gene3D" id="3.30.460.10">
    <property type="entry name" value="Beta Polymerase, domain 2"/>
    <property type="match status" value="1"/>
</dbReference>
<dbReference type="Gene3D" id="1.10.3090.10">
    <property type="entry name" value="cca-adding enzyme, domain 2"/>
    <property type="match status" value="1"/>
</dbReference>
<dbReference type="HAMAP" id="MF_00277">
    <property type="entry name" value="PII_uridylyl_transf"/>
    <property type="match status" value="1"/>
</dbReference>
<dbReference type="InterPro" id="IPR045865">
    <property type="entry name" value="ACT-like_dom_sf"/>
</dbReference>
<dbReference type="InterPro" id="IPR002912">
    <property type="entry name" value="ACT_dom"/>
</dbReference>
<dbReference type="InterPro" id="IPR003607">
    <property type="entry name" value="HD/PDEase_dom"/>
</dbReference>
<dbReference type="InterPro" id="IPR006674">
    <property type="entry name" value="HD_domain"/>
</dbReference>
<dbReference type="InterPro" id="IPR043519">
    <property type="entry name" value="NT_sf"/>
</dbReference>
<dbReference type="InterPro" id="IPR013546">
    <property type="entry name" value="PII_UdlTrfase/GS_AdlTrfase"/>
</dbReference>
<dbReference type="InterPro" id="IPR002934">
    <property type="entry name" value="Polymerase_NTP_transf_dom"/>
</dbReference>
<dbReference type="InterPro" id="IPR010043">
    <property type="entry name" value="UTase/UR"/>
</dbReference>
<dbReference type="NCBIfam" id="NF002487">
    <property type="entry name" value="PRK01759.1"/>
    <property type="match status" value="1"/>
</dbReference>
<dbReference type="NCBIfam" id="NF003448">
    <property type="entry name" value="PRK05007.1"/>
    <property type="match status" value="1"/>
</dbReference>
<dbReference type="NCBIfam" id="TIGR01693">
    <property type="entry name" value="UTase_glnD"/>
    <property type="match status" value="1"/>
</dbReference>
<dbReference type="PANTHER" id="PTHR47320">
    <property type="entry name" value="BIFUNCTIONAL URIDYLYLTRANSFERASE/URIDYLYL-REMOVING ENZYME"/>
    <property type="match status" value="1"/>
</dbReference>
<dbReference type="PANTHER" id="PTHR47320:SF1">
    <property type="entry name" value="BIFUNCTIONAL URIDYLYLTRANSFERASE_URIDYLYL-REMOVING ENZYME"/>
    <property type="match status" value="1"/>
</dbReference>
<dbReference type="Pfam" id="PF08335">
    <property type="entry name" value="GlnD_UR_UTase"/>
    <property type="match status" value="1"/>
</dbReference>
<dbReference type="Pfam" id="PF01966">
    <property type="entry name" value="HD"/>
    <property type="match status" value="1"/>
</dbReference>
<dbReference type="Pfam" id="PF01909">
    <property type="entry name" value="NTP_transf_2"/>
    <property type="match status" value="1"/>
</dbReference>
<dbReference type="PIRSF" id="PIRSF006288">
    <property type="entry name" value="PII_uridyltransf"/>
    <property type="match status" value="1"/>
</dbReference>
<dbReference type="SMART" id="SM00471">
    <property type="entry name" value="HDc"/>
    <property type="match status" value="1"/>
</dbReference>
<dbReference type="SUPFAM" id="SSF55021">
    <property type="entry name" value="ACT-like"/>
    <property type="match status" value="2"/>
</dbReference>
<dbReference type="SUPFAM" id="SSF109604">
    <property type="entry name" value="HD-domain/PDEase-like"/>
    <property type="match status" value="1"/>
</dbReference>
<dbReference type="SUPFAM" id="SSF81301">
    <property type="entry name" value="Nucleotidyltransferase"/>
    <property type="match status" value="1"/>
</dbReference>
<dbReference type="SUPFAM" id="SSF81593">
    <property type="entry name" value="Nucleotidyltransferase substrate binding subunit/domain"/>
    <property type="match status" value="1"/>
</dbReference>
<dbReference type="PROSITE" id="PS51671">
    <property type="entry name" value="ACT"/>
    <property type="match status" value="2"/>
</dbReference>
<dbReference type="PROSITE" id="PS51831">
    <property type="entry name" value="HD"/>
    <property type="match status" value="1"/>
</dbReference>
<name>GLND_VIBVY</name>
<gene>
    <name evidence="1" type="primary">glnD</name>
    <name type="ordered locus">VV2559</name>
</gene>
<keyword id="KW-0378">Hydrolase</keyword>
<keyword id="KW-0460">Magnesium</keyword>
<keyword id="KW-0511">Multifunctional enzyme</keyword>
<keyword id="KW-0548">Nucleotidyltransferase</keyword>
<keyword id="KW-0677">Repeat</keyword>
<keyword id="KW-0808">Transferase</keyword>
<proteinExistence type="inferred from homology"/>
<sequence>MAFQSPLTFNDEQLTVAQLKSQLDLFANAQKQAFLNHHPVTDLVLSRAEYMDLLLTRLWRYYGFSEIHNISLVAVGGYGRGELHPLSDIDILVLSKHKLPGELETKLSEFITLLWDLRLEVGHAVRTVEECAAIGREDLTVATNLQEARLLCGSENTFQDLKKVVLSDSFWPSETFYRAKIQEQRERHARYHDTTYNLEPDIKSTPGGLRDIHTLSWVARRHFGATSLLEMSRYGFLTDAEYRELVECQDFLWRVRFALHIELKRYDNRLTFAHQIQVAEHLGFKGEGNRGIEMMMKEFYRTLRRVAELNKMLLKLFDQAIINGGETEPAVIINEDFQRRGRLIEARKPALFQARPETILDMFLHIANDSTIDSVSPPTLRQLRTARRRLNKFLHTIPEAREKFMELVRHPNALHRAFSLMHKLGVLAAYLPQWSQIVGQMQFDLFHVYTVDEHSVRLLNHINTFSYAKNHDKHPICCEVYPRLQKKELLLLAAIFHDIGKGRGGDHSEIGEKEAYDFCIEHGLSKPEAKLVSWLVRHHLLMSVTAQRRDIYDPEVITEFAKQVRDEERLEYLVCLTVADICATNPELWNSWKRTLLAELFYSTQRALRRGLENPVDVRERIRHNQQLASALLRKEGFTAREIEVLWQRFKADYFLRHTHKQIAWHCEHILRMDNPEQPLVLMSKKATRGGTEVFVYTKDQHALFATVVAELDRRNFNVHDAQIMSSKDGYVLDTFMVLDQHGQAIDVDNHKAVIKHLMHVLTDGRPTKVKTRRTPYKLQHFKVKTKVDFLPTKSKKRTLMELVALDTPGLLAITGATFADMGFNLHGAKITTIGERAEDLFILTSENGGRLSEEQELQLREKLIHNIAELAP</sequence>
<feature type="chain" id="PRO_0000192775" description="Bifunctional uridylyltransferase/uridylyl-removing enzyme">
    <location>
        <begin position="1"/>
        <end position="873"/>
    </location>
</feature>
<feature type="domain" description="HD" evidence="2">
    <location>
        <begin position="451"/>
        <end position="573"/>
    </location>
</feature>
<feature type="domain" description="ACT 1" evidence="1">
    <location>
        <begin position="693"/>
        <end position="773"/>
    </location>
</feature>
<feature type="domain" description="ACT 2" evidence="1">
    <location>
        <begin position="800"/>
        <end position="873"/>
    </location>
</feature>
<feature type="region of interest" description="Uridylyltransferase">
    <location>
        <begin position="1"/>
        <end position="332"/>
    </location>
</feature>
<feature type="region of interest" description="Uridylyl-removing">
    <location>
        <begin position="333"/>
        <end position="692"/>
    </location>
</feature>